<comment type="function">
    <text evidence="9">Plays a central role in integrating RNA silencing and chromatin signals in 21 nt siRNA-dependent DNA methylation on cytosine pathway leading to transcriptional gene silencing of specific sequences. Involved in a chromatin-based RNA silencing pathway that encompasses both post-transcriptional gene silencing (PTGS) (e.g. RDR1, RDR6 and AGO2) and transcriptional gene silencing (TGS) (e.g. siRNA-dependent DNA methylation and histone H3) components. Mediates siRNA accumulation at specific chromatin loci. Binds H3K4me0 through its PHD to enforce low levels of H3K4 methylation and gene silencing at a subset of genomic loci.</text>
</comment>
<comment type="subunit">
    <text evidence="9">Interacts with unmethylated histone H3 and AGO2. The interaction with AGO2 in required to direct DNA methylation and silencing.</text>
</comment>
<comment type="subcellular location">
    <subcellularLocation>
        <location evidence="9">Nucleus</location>
    </subcellularLocation>
</comment>
<comment type="tissue specificity">
    <text evidence="9">Expressed in seedlings, mostly in the vasculature and shoot apices of young seedlings.</text>
</comment>
<comment type="domain">
    <text evidence="9">The PHD-type zinc finger (599-665) binds to unmethylated histone H3 'Lys-4' (H3K4me0).</text>
</comment>
<comment type="disruption phenotype">
    <text evidence="9">Silencing-deficiency characterized by a lower siRNA accumulation and a transcriptional up-regulation of specific loci that correlates with a local loss of cytosine methylation on DNA and an increased methylation of histone H3 'Lys-4' (e.g. H3K4me2, H3K4me3) and 'Lys-36' (e.g. H3K36me3).</text>
</comment>
<comment type="sequence caution" evidence="10">
    <conflict type="erroneous gene model prediction">
        <sequence resource="EMBL-CDS" id="AAD22293"/>
    </conflict>
    <text>Was originally thought to correspond to three different genes At2g16470, At2g16480 and At2g16485.</text>
</comment>
<comment type="sequence caution" evidence="10">
    <conflict type="erroneous gene model prediction">
        <sequence resource="EMBL-CDS" id="AAD22314"/>
    </conflict>
    <text>Was originally thought to correspond to three different genes At2g16470, At2g16480 and At2g16485.</text>
</comment>
<comment type="sequence caution" evidence="10">
    <conflict type="erroneous gene model prediction">
        <sequence resource="EMBL-CDS" id="AAM15362"/>
    </conflict>
    <text>Was originally thought to correspond to three different genes At2g16470, At2g16480 and At2g16485.</text>
</comment>
<comment type="sequence caution" evidence="10">
    <conflict type="erroneous gene model prediction">
        <sequence resource="EMBL-CDS" id="ABE65448"/>
    </conflict>
</comment>
<organism>
    <name type="scientific">Arabidopsis thaliana</name>
    <name type="common">Mouse-ear cress</name>
    <dbReference type="NCBI Taxonomy" id="3702"/>
    <lineage>
        <taxon>Eukaryota</taxon>
        <taxon>Viridiplantae</taxon>
        <taxon>Streptophyta</taxon>
        <taxon>Embryophyta</taxon>
        <taxon>Tracheophyta</taxon>
        <taxon>Spermatophyta</taxon>
        <taxon>Magnoliopsida</taxon>
        <taxon>eudicotyledons</taxon>
        <taxon>Gunneridae</taxon>
        <taxon>Pentapetalae</taxon>
        <taxon>rosids</taxon>
        <taxon>malvids</taxon>
        <taxon>Brassicales</taxon>
        <taxon>Brassicaceae</taxon>
        <taxon>Camelineae</taxon>
        <taxon>Arabidopsis</taxon>
    </lineage>
</organism>
<feature type="chain" id="PRO_0000371978" description="Zinc finger CCCH domain-containing protein 19">
    <location>
        <begin position="1"/>
        <end position="1773"/>
    </location>
</feature>
<feature type="domain" description="SWIB/MDM2" evidence="7">
    <location>
        <begin position="801"/>
        <end position="884"/>
    </location>
</feature>
<feature type="domain" description="Plus3" evidence="5">
    <location>
        <begin position="944"/>
        <end position="1076"/>
    </location>
</feature>
<feature type="domain" description="GYF" evidence="3">
    <location>
        <begin position="1307"/>
        <end position="1361"/>
    </location>
</feature>
<feature type="zinc finger region" description="PHD-type" evidence="4">
    <location>
        <begin position="599"/>
        <end position="665"/>
    </location>
</feature>
<feature type="zinc finger region" description="C3H1-type" evidence="6">
    <location>
        <begin position="1747"/>
        <end position="1773"/>
    </location>
</feature>
<feature type="region of interest" description="Disordered" evidence="8">
    <location>
        <begin position="145"/>
        <end position="166"/>
    </location>
</feature>
<feature type="region of interest" description="Disordered" evidence="8">
    <location>
        <begin position="270"/>
        <end position="290"/>
    </location>
</feature>
<feature type="region of interest" description="Disordered" evidence="8">
    <location>
        <begin position="361"/>
        <end position="409"/>
    </location>
</feature>
<feature type="region of interest" description="Disordered" evidence="8">
    <location>
        <begin position="434"/>
        <end position="591"/>
    </location>
</feature>
<feature type="region of interest" description="Disordered" evidence="8">
    <location>
        <begin position="741"/>
        <end position="797"/>
    </location>
</feature>
<feature type="region of interest" description="Disordered" evidence="8">
    <location>
        <begin position="903"/>
        <end position="935"/>
    </location>
</feature>
<feature type="region of interest" description="Disordered" evidence="8">
    <location>
        <begin position="1139"/>
        <end position="1274"/>
    </location>
</feature>
<feature type="region of interest" description="Disordered" evidence="8">
    <location>
        <begin position="1409"/>
        <end position="1469"/>
    </location>
</feature>
<feature type="region of interest" description="Disordered" evidence="8">
    <location>
        <begin position="1485"/>
        <end position="1605"/>
    </location>
</feature>
<feature type="region of interest" description="Disordered" evidence="8">
    <location>
        <begin position="1649"/>
        <end position="1746"/>
    </location>
</feature>
<feature type="coiled-coil region" evidence="2">
    <location>
        <begin position="196"/>
        <end position="218"/>
    </location>
</feature>
<feature type="coiled-coil region" evidence="2">
    <location>
        <begin position="403"/>
        <end position="437"/>
    </location>
</feature>
<feature type="short sequence motif" description="Nuclear localization signal 1" evidence="1">
    <location>
        <begin position="581"/>
        <end position="588"/>
    </location>
</feature>
<feature type="short sequence motif" description="Nuclear localization signal 2" evidence="1">
    <location>
        <begin position="921"/>
        <end position="928"/>
    </location>
</feature>
<feature type="compositionally biased region" description="Basic and acidic residues" evidence="8">
    <location>
        <begin position="147"/>
        <end position="156"/>
    </location>
</feature>
<feature type="compositionally biased region" description="Basic and acidic residues" evidence="8">
    <location>
        <begin position="273"/>
        <end position="286"/>
    </location>
</feature>
<feature type="compositionally biased region" description="Basic and acidic residues" evidence="8">
    <location>
        <begin position="361"/>
        <end position="378"/>
    </location>
</feature>
<feature type="compositionally biased region" description="Basic and acidic residues" evidence="8">
    <location>
        <begin position="444"/>
        <end position="455"/>
    </location>
</feature>
<feature type="compositionally biased region" description="Basic and acidic residues" evidence="8">
    <location>
        <begin position="497"/>
        <end position="513"/>
    </location>
</feature>
<feature type="compositionally biased region" description="Acidic residues" evidence="8">
    <location>
        <begin position="514"/>
        <end position="529"/>
    </location>
</feature>
<feature type="compositionally biased region" description="Acidic residues" evidence="8">
    <location>
        <begin position="551"/>
        <end position="572"/>
    </location>
</feature>
<feature type="compositionally biased region" description="Basic residues" evidence="8">
    <location>
        <begin position="578"/>
        <end position="588"/>
    </location>
</feature>
<feature type="compositionally biased region" description="Basic and acidic residues" evidence="8">
    <location>
        <begin position="741"/>
        <end position="751"/>
    </location>
</feature>
<feature type="compositionally biased region" description="Polar residues" evidence="8">
    <location>
        <begin position="752"/>
        <end position="762"/>
    </location>
</feature>
<feature type="compositionally biased region" description="Basic and acidic residues" evidence="8">
    <location>
        <begin position="903"/>
        <end position="919"/>
    </location>
</feature>
<feature type="compositionally biased region" description="Basic residues" evidence="8">
    <location>
        <begin position="920"/>
        <end position="935"/>
    </location>
</feature>
<feature type="compositionally biased region" description="Basic and acidic residues" evidence="8">
    <location>
        <begin position="1139"/>
        <end position="1152"/>
    </location>
</feature>
<feature type="compositionally biased region" description="Acidic residues" evidence="8">
    <location>
        <begin position="1153"/>
        <end position="1163"/>
    </location>
</feature>
<feature type="compositionally biased region" description="Polar residues" evidence="8">
    <location>
        <begin position="1193"/>
        <end position="1212"/>
    </location>
</feature>
<feature type="compositionally biased region" description="Polar residues" evidence="8">
    <location>
        <begin position="1409"/>
        <end position="1433"/>
    </location>
</feature>
<feature type="compositionally biased region" description="Polar residues" evidence="8">
    <location>
        <begin position="1441"/>
        <end position="1469"/>
    </location>
</feature>
<feature type="compositionally biased region" description="Polar residues" evidence="8">
    <location>
        <begin position="1499"/>
        <end position="1509"/>
    </location>
</feature>
<feature type="compositionally biased region" description="Polar residues" evidence="8">
    <location>
        <begin position="1518"/>
        <end position="1528"/>
    </location>
</feature>
<feature type="compositionally biased region" description="Low complexity" evidence="8">
    <location>
        <begin position="1529"/>
        <end position="1555"/>
    </location>
</feature>
<feature type="compositionally biased region" description="Polar residues" evidence="8">
    <location>
        <begin position="1569"/>
        <end position="1579"/>
    </location>
</feature>
<feature type="compositionally biased region" description="Low complexity" evidence="8">
    <location>
        <begin position="1585"/>
        <end position="1602"/>
    </location>
</feature>
<feature type="compositionally biased region" description="Low complexity" evidence="8">
    <location>
        <begin position="1666"/>
        <end position="1677"/>
    </location>
</feature>
<feature type="compositionally biased region" description="Polar residues" evidence="8">
    <location>
        <begin position="1678"/>
        <end position="1708"/>
    </location>
</feature>
<feature type="compositionally biased region" description="Low complexity" evidence="8">
    <location>
        <begin position="1722"/>
        <end position="1735"/>
    </location>
</feature>
<feature type="compositionally biased region" description="Polar residues" evidence="8">
    <location>
        <begin position="1737"/>
        <end position="1746"/>
    </location>
</feature>
<feature type="modified residue" description="Phosphoserine" evidence="11">
    <location>
        <position position="1281"/>
    </location>
</feature>
<proteinExistence type="evidence at protein level"/>
<name>C3H19_ARATH</name>
<keyword id="KW-0175">Coiled coil</keyword>
<keyword id="KW-0238">DNA-binding</keyword>
<keyword id="KW-0479">Metal-binding</keyword>
<keyword id="KW-0539">Nucleus</keyword>
<keyword id="KW-0597">Phosphoprotein</keyword>
<keyword id="KW-1185">Reference proteome</keyword>
<keyword id="KW-0677">Repeat</keyword>
<keyword id="KW-0943">RNA-mediated gene silencing</keyword>
<keyword id="KW-0804">Transcription</keyword>
<keyword id="KW-0805">Transcription regulation</keyword>
<keyword id="KW-0862">Zinc</keyword>
<keyword id="KW-0863">Zinc-finger</keyword>
<evidence type="ECO:0000250" key="1"/>
<evidence type="ECO:0000255" key="2"/>
<evidence type="ECO:0000255" key="3">
    <source>
        <dbReference type="PROSITE-ProRule" id="PRU00101"/>
    </source>
</evidence>
<evidence type="ECO:0000255" key="4">
    <source>
        <dbReference type="PROSITE-ProRule" id="PRU00146"/>
    </source>
</evidence>
<evidence type="ECO:0000255" key="5">
    <source>
        <dbReference type="PROSITE-ProRule" id="PRU00693"/>
    </source>
</evidence>
<evidence type="ECO:0000255" key="6">
    <source>
        <dbReference type="PROSITE-ProRule" id="PRU00723"/>
    </source>
</evidence>
<evidence type="ECO:0000255" key="7">
    <source>
        <dbReference type="PROSITE-ProRule" id="PRU01273"/>
    </source>
</evidence>
<evidence type="ECO:0000256" key="8">
    <source>
        <dbReference type="SAM" id="MobiDB-lite"/>
    </source>
</evidence>
<evidence type="ECO:0000269" key="9">
    <source>
    </source>
</evidence>
<evidence type="ECO:0000305" key="10"/>
<evidence type="ECO:0007744" key="11">
    <source>
    </source>
</evidence>
<accession>Q9SIV5</accession>
<accession>F4IKD7</accession>
<accession>Q8S8E0</accession>
<accession>Q9SIV4</accession>
<reference key="1">
    <citation type="journal article" date="1999" name="Nature">
        <title>Sequence and analysis of chromosome 2 of the plant Arabidopsis thaliana.</title>
        <authorList>
            <person name="Lin X."/>
            <person name="Kaul S."/>
            <person name="Rounsley S.D."/>
            <person name="Shea T.P."/>
            <person name="Benito M.-I."/>
            <person name="Town C.D."/>
            <person name="Fujii C.Y."/>
            <person name="Mason T.M."/>
            <person name="Bowman C.L."/>
            <person name="Barnstead M.E."/>
            <person name="Feldblyum T.V."/>
            <person name="Buell C.R."/>
            <person name="Ketchum K.A."/>
            <person name="Lee J.J."/>
            <person name="Ronning C.M."/>
            <person name="Koo H.L."/>
            <person name="Moffat K.S."/>
            <person name="Cronin L.A."/>
            <person name="Shen M."/>
            <person name="Pai G."/>
            <person name="Van Aken S."/>
            <person name="Umayam L."/>
            <person name="Tallon L.J."/>
            <person name="Gill J.E."/>
            <person name="Adams M.D."/>
            <person name="Carrera A.J."/>
            <person name="Creasy T.H."/>
            <person name="Goodman H.M."/>
            <person name="Somerville C.R."/>
            <person name="Copenhaver G.P."/>
            <person name="Preuss D."/>
            <person name="Nierman W.C."/>
            <person name="White O."/>
            <person name="Eisen J.A."/>
            <person name="Salzberg S.L."/>
            <person name="Fraser C.M."/>
            <person name="Venter J.C."/>
        </authorList>
    </citation>
    <scope>NUCLEOTIDE SEQUENCE [LARGE SCALE GENOMIC DNA]</scope>
    <source>
        <strain>cv. Columbia</strain>
    </source>
</reference>
<reference key="2">
    <citation type="journal article" date="2017" name="Plant J.">
        <title>Araport11: a complete reannotation of the Arabidopsis thaliana reference genome.</title>
        <authorList>
            <person name="Cheng C.Y."/>
            <person name="Krishnakumar V."/>
            <person name="Chan A.P."/>
            <person name="Thibaud-Nissen F."/>
            <person name="Schobel S."/>
            <person name="Town C.D."/>
        </authorList>
    </citation>
    <scope>GENOME REANNOTATION</scope>
    <source>
        <strain>cv. Columbia</strain>
    </source>
</reference>
<reference key="3">
    <citation type="journal article" date="2006" name="Plant Biotechnol. J.">
        <title>Simultaneous high-throughput recombinational cloning of open reading frames in closed and open configurations.</title>
        <authorList>
            <person name="Underwood B.A."/>
            <person name="Vanderhaeghen R."/>
            <person name="Whitford R."/>
            <person name="Town C.D."/>
            <person name="Hilson P."/>
        </authorList>
    </citation>
    <scope>NUCLEOTIDE SEQUENCE [LARGE SCALE GENOMIC DNA]</scope>
    <source>
        <strain>cv. Columbia</strain>
    </source>
</reference>
<reference key="4">
    <citation type="journal article" date="2008" name="BMC Genomics">
        <title>Genome-wide analysis of CCCH zinc finger family in Arabidopsis and rice.</title>
        <authorList>
            <person name="Wang D."/>
            <person name="Guo Y."/>
            <person name="Wu C."/>
            <person name="Yang G."/>
            <person name="Li Y."/>
            <person name="Zheng C."/>
        </authorList>
    </citation>
    <scope>NOMENCLATURE</scope>
</reference>
<reference key="5">
    <citation type="journal article" date="2009" name="J. Proteomics">
        <title>Phosphoproteomic analysis of nuclei-enriched fractions from Arabidopsis thaliana.</title>
        <authorList>
            <person name="Jones A.M.E."/>
            <person name="MacLean D."/>
            <person name="Studholme D.J."/>
            <person name="Serna-Sanz A."/>
            <person name="Andreasson E."/>
            <person name="Rathjen J.P."/>
            <person name="Peck S.C."/>
        </authorList>
    </citation>
    <scope>PHOSPHORYLATION [LARGE SCALE ANALYSIS] AT SER-1281</scope>
    <scope>IDENTIFICATION BY MASS SPECTROMETRY [LARGE SCALE ANALYSIS]</scope>
    <source>
        <strain>cv. Columbia</strain>
    </source>
</reference>
<reference key="6">
    <citation type="journal article" date="2012" name="Mol. Cell">
        <title>NERD, a plant-specific GW protein, defines an additional RNAi-dependent chromatin-based pathway in Arabidopsis.</title>
        <authorList>
            <person name="Pontier D."/>
            <person name="Picart C."/>
            <person name="Roudier F."/>
            <person name="Garcia D."/>
            <person name="Lahmy S."/>
            <person name="Azevedo J."/>
            <person name="Alart E."/>
            <person name="Laudie M."/>
            <person name="Karlowski W.M."/>
            <person name="Cooke R."/>
            <person name="Colot V."/>
            <person name="Voinnet O."/>
            <person name="Lagrange T."/>
        </authorList>
    </citation>
    <scope>FUNCTION</scope>
    <scope>DISRUPTION PHENOTYPE</scope>
    <scope>TISSUE SPECIFICITY</scope>
    <scope>SUBCELLULAR LOCATION</scope>
    <scope>INTERACTION WITH HISTONE H3 AND AGO2</scope>
    <scope>DOMAIN PHD</scope>
    <source>
        <strain>cv. Columbia</strain>
    </source>
</reference>
<gene>
    <name type="primary">NERD</name>
    <name type="ordered locus">At2g16485/At2g16480/At2g16470</name>
    <name type="ORF">F16F14</name>
</gene>
<sequence length="1773" mass="195051">MDSDSERASLESIKDNSECVHVSNEPNLTATCVDSSVGEEGVTDVNSSAAVSELVPPEQGEGALLNSVPEISERGIPVDVVSSVDGGGEENAAFNIQEIDSVGGDAAAVEEVPLKSSSVVGEGREEEAGASIVKEEDFVAEANLSGDRLEENKEVSMEEEPSSHELSVCEVNGVDSLNDEENREVGEQIVCGSMGGEEIESDLESKKEKVDVIEEETTAQAASLVNAIEIPDDKEVACVAGFTEISSQDKGLDESGNGFLDEEPVKELQIGEGAKDLTDGDAKEGVDVTEDEMDIQVLKKSKEEEKVDSTTELEIETMRLEVHDVATEMSDKTVISSAVVTQFTGETSNDKETVMDDVKEDVDKDSEAGKSLDIHVPEATEEVDTDVNYGVGIEKEGDGVGGAEEAGQTVDLEEIREENQELSKELAQVDETKISEMSEVTETMIKDEDQEKDDNMTDLAEDVENHRDSSVADIEEGREDHEDMGVTETQKETVLGKVDRTKIAEVSEETDTRIEDEDQEKDDEMTDVAEDVKTHGDSSVADIEEGRESQEEMTETQEDSVMADEEPEEVEEENKSAGGKRKRGRNTKTVKGTGKKKEEDVCFMCFDGGDLVLCDRRGCTKAYHPSCVDRDEAFFQTKGKWNCGWHLCSKCEKTATYLCYTCMFSLCKGCAKDAVFFCIRGNKGLCETCMETVKLIERKQQEKEPAQLDFNDKTSWEYLFKDYWIDLKTQLSLSPEELDQAKRPLKGHETNASKQGTASETDYVTDGGSDSDSSPKKRKTRSRSKSGSAEKILSSGDKNLSDETMEWASKELLDLVVHMRRGDRSFLPMLEVQTLLLAYIKRYNLRDPRRKSQVICDSRLQNLFGKSHVGHFEMLNLLDSHFLKKEQNQADDIQGDIVDTEEPNHVDVDENLDHPVKSGKDKKRKTRKKNVRKGRQSNLDDFAAVDMHNINLIYLRRSLVEDLLEDSTAFEEKVASAFVRLRISGNQKQDLYRLVQVVGTSKAPEPYKVGKKTTDYVLEILNLDKTEVISIDIISNQDFTEDECKRLKQSIKCGLINRLTVGDIQEKAIALQEVRVKNLLEAEILRFSHLRDRASDMGRRKEYPYLLKLSNSLTMLTLRECVEKLQLLKSPEERQRRLEEIPEIHADPKMDPDCESEDEDEKEEKEKEKQLRPRSSSFNRRGRDPISPRKGGFSSNESWTGTSNYSNTSANRELSRSYSGRGSTGRGDYLGSSDDKVSDSMWTSAREREVQPSLGSEKPRSVSIPETPARSSRAIAPPELSPRIASEISMAPPAVVSQPVPKSNDSEKIWHYKDPSGKVQGPFSMAQLRKWNNTGYFPAKLEIWKANESPLDSVLLTDALAGLFQKQTQAVDNSYMKAQVAAFSGQSSQSEPNLGFAARIAPTTIEIPRNSQDTWSQGGSLPSPTPNQITTPTAKRRNFESRWSPTKPSPQSANQSMNYSVAQSGQSQTSRIDIPVVVNSAGALQPQTYPIPTPDPINVSVNHSATLHSPTPAGGKQSWGSMQTDHGGSNTPSSQNNSTSYGTPSPSVLPSQSQPGFPPSDSWKVAVPSQPNAQAQAQWGMNMVNNNQNSAQPQAPANQNSSWGQGTVNPNMGWVGPAQTGVNVNWGGSSVPSTVQGITHSGWVAPVQGQTQAYPNPGWGPTGHPQSQSQSQVQAQAGTTGSGWMQPGQGIQSGNSNQNWGTQNQTAIPSGGSGGNQAGYWGNQQQSQNGDSGYGWNRQSGGQQNNFKGQRVCKFFRENGHCRKGASCNYLHN</sequence>
<dbReference type="EMBL" id="AC007047">
    <property type="protein sequence ID" value="AAD22314.1"/>
    <property type="status" value="ALT_SEQ"/>
    <property type="molecule type" value="Genomic_DNA"/>
</dbReference>
<dbReference type="EMBL" id="AC007047">
    <property type="protein sequence ID" value="AAD22293.1"/>
    <property type="status" value="ALT_SEQ"/>
    <property type="molecule type" value="Genomic_DNA"/>
</dbReference>
<dbReference type="EMBL" id="AC007047">
    <property type="protein sequence ID" value="AAM15362.1"/>
    <property type="status" value="ALT_SEQ"/>
    <property type="molecule type" value="Genomic_DNA"/>
</dbReference>
<dbReference type="EMBL" id="CP002685">
    <property type="protein sequence ID" value="AEC06501.1"/>
    <property type="molecule type" value="Genomic_DNA"/>
</dbReference>
<dbReference type="EMBL" id="DQ446507">
    <property type="protein sequence ID" value="ABE65448.1"/>
    <property type="status" value="ALT_SEQ"/>
    <property type="molecule type" value="Genomic_DNA"/>
</dbReference>
<dbReference type="PIR" id="F84540">
    <property type="entry name" value="F84540"/>
</dbReference>
<dbReference type="PIR" id="G84540">
    <property type="entry name" value="G84540"/>
</dbReference>
<dbReference type="RefSeq" id="NP_179241.4">
    <property type="nucleotide sequence ID" value="NM_127202.5"/>
</dbReference>
<dbReference type="SMR" id="Q9SIV5"/>
<dbReference type="FunCoup" id="Q9SIV5">
    <property type="interactions" value="1413"/>
</dbReference>
<dbReference type="STRING" id="3702.Q9SIV5"/>
<dbReference type="GlyGen" id="Q9SIV5">
    <property type="glycosylation" value="4 sites, 1 O-linked glycan (1 site)"/>
</dbReference>
<dbReference type="iPTMnet" id="Q9SIV5"/>
<dbReference type="PaxDb" id="3702-AT2G16485.1"/>
<dbReference type="ProteomicsDB" id="239086"/>
<dbReference type="EnsemblPlants" id="AT2G16485.1">
    <property type="protein sequence ID" value="AT2G16485.1"/>
    <property type="gene ID" value="AT2G16485"/>
</dbReference>
<dbReference type="GeneID" id="816147"/>
<dbReference type="Gramene" id="AT2G16485.1">
    <property type="protein sequence ID" value="AT2G16485.1"/>
    <property type="gene ID" value="AT2G16485"/>
</dbReference>
<dbReference type="KEGG" id="ath:AT2G16485"/>
<dbReference type="Araport" id="AT2G16485"/>
<dbReference type="TAIR" id="AT2G16485">
    <property type="gene designation" value="NERD"/>
</dbReference>
<dbReference type="eggNOG" id="KOG1081">
    <property type="taxonomic scope" value="Eukaryota"/>
</dbReference>
<dbReference type="eggNOG" id="KOG1862">
    <property type="taxonomic scope" value="Eukaryota"/>
</dbReference>
<dbReference type="eggNOG" id="KOG1946">
    <property type="taxonomic scope" value="Eukaryota"/>
</dbReference>
<dbReference type="HOGENOM" id="CLU_236474_0_0_1"/>
<dbReference type="InParanoid" id="Q9SIV5"/>
<dbReference type="CD-CODE" id="4299E36E">
    <property type="entry name" value="Nucleolus"/>
</dbReference>
<dbReference type="PRO" id="PR:Q9SIV5"/>
<dbReference type="Proteomes" id="UP000006548">
    <property type="component" value="Chromosome 2"/>
</dbReference>
<dbReference type="ExpressionAtlas" id="Q9SIV5">
    <property type="expression patterns" value="baseline and differential"/>
</dbReference>
<dbReference type="GO" id="GO:0016593">
    <property type="term" value="C:Cdc73/Paf1 complex"/>
    <property type="evidence" value="ECO:0000318"/>
    <property type="project" value="GO_Central"/>
</dbReference>
<dbReference type="GO" id="GO:0005634">
    <property type="term" value="C:nucleus"/>
    <property type="evidence" value="ECO:0000314"/>
    <property type="project" value="UniProtKB"/>
</dbReference>
<dbReference type="GO" id="GO:0003677">
    <property type="term" value="F:DNA binding"/>
    <property type="evidence" value="ECO:0007669"/>
    <property type="project" value="UniProtKB-KW"/>
</dbReference>
<dbReference type="GO" id="GO:0042393">
    <property type="term" value="F:histone binding"/>
    <property type="evidence" value="ECO:0000314"/>
    <property type="project" value="UniProtKB"/>
</dbReference>
<dbReference type="GO" id="GO:1990269">
    <property type="term" value="F:RNA polymerase II C-terminal domain phosphoserine binding"/>
    <property type="evidence" value="ECO:0000318"/>
    <property type="project" value="GO_Central"/>
</dbReference>
<dbReference type="GO" id="GO:0008270">
    <property type="term" value="F:zinc ion binding"/>
    <property type="evidence" value="ECO:0007669"/>
    <property type="project" value="UniProtKB-KW"/>
</dbReference>
<dbReference type="GO" id="GO:0080188">
    <property type="term" value="P:gene silencing by siRNA-directed DNA methylation"/>
    <property type="evidence" value="ECO:0000314"/>
    <property type="project" value="GO_Central"/>
</dbReference>
<dbReference type="CDD" id="cd19757">
    <property type="entry name" value="Bbox1"/>
    <property type="match status" value="1"/>
</dbReference>
<dbReference type="CDD" id="cd00072">
    <property type="entry name" value="GYF"/>
    <property type="match status" value="1"/>
</dbReference>
<dbReference type="CDD" id="cd15568">
    <property type="entry name" value="PHD5_NSD"/>
    <property type="match status" value="1"/>
</dbReference>
<dbReference type="CDD" id="cd10567">
    <property type="entry name" value="SWIB-MDM2_like"/>
    <property type="match status" value="1"/>
</dbReference>
<dbReference type="FunFam" id="3.30.1490.40:FF:000004">
    <property type="entry name" value="Zinc finger CCCH domain-containing protein 19"/>
    <property type="match status" value="1"/>
</dbReference>
<dbReference type="FunFam" id="3.30.40.10:FF:000303">
    <property type="entry name" value="Zinc finger CCCH domain-containing protein 19"/>
    <property type="match status" value="1"/>
</dbReference>
<dbReference type="FunFam" id="3.90.70.200:FF:000002">
    <property type="entry name" value="Zinc finger CCCH domain-containing protein 19"/>
    <property type="match status" value="1"/>
</dbReference>
<dbReference type="Gene3D" id="3.30.1490.40">
    <property type="match status" value="1"/>
</dbReference>
<dbReference type="Gene3D" id="3.90.70.200">
    <property type="entry name" value="Plus-3 domain"/>
    <property type="match status" value="1"/>
</dbReference>
<dbReference type="Gene3D" id="1.10.245.10">
    <property type="entry name" value="SWIB/MDM2 domain"/>
    <property type="match status" value="1"/>
</dbReference>
<dbReference type="Gene3D" id="3.30.40.10">
    <property type="entry name" value="Zinc/RING finger domain, C3HC4 (zinc finger)"/>
    <property type="match status" value="1"/>
</dbReference>
<dbReference type="InterPro" id="IPR003169">
    <property type="entry name" value="GYF"/>
</dbReference>
<dbReference type="InterPro" id="IPR035445">
    <property type="entry name" value="GYF-like_dom_sf"/>
</dbReference>
<dbReference type="InterPro" id="IPR004343">
    <property type="entry name" value="Plus-3_dom"/>
</dbReference>
<dbReference type="InterPro" id="IPR036128">
    <property type="entry name" value="Plus3-like_sf"/>
</dbReference>
<dbReference type="InterPro" id="IPR019835">
    <property type="entry name" value="SWIB_domain"/>
</dbReference>
<dbReference type="InterPro" id="IPR036885">
    <property type="entry name" value="SWIB_MDM2_dom_sf"/>
</dbReference>
<dbReference type="InterPro" id="IPR003121">
    <property type="entry name" value="SWIB_MDM2_domain"/>
</dbReference>
<dbReference type="InterPro" id="IPR019786">
    <property type="entry name" value="Zinc_finger_PHD-type_CS"/>
</dbReference>
<dbReference type="InterPro" id="IPR000571">
    <property type="entry name" value="Znf_CCCH"/>
</dbReference>
<dbReference type="InterPro" id="IPR011011">
    <property type="entry name" value="Znf_FYVE_PHD"/>
</dbReference>
<dbReference type="InterPro" id="IPR001965">
    <property type="entry name" value="Znf_PHD"/>
</dbReference>
<dbReference type="InterPro" id="IPR019787">
    <property type="entry name" value="Znf_PHD-finger"/>
</dbReference>
<dbReference type="InterPro" id="IPR013083">
    <property type="entry name" value="Znf_RING/FYVE/PHD"/>
</dbReference>
<dbReference type="PANTHER" id="PTHR13115">
    <property type="entry name" value="RNA POLYMERASE-ASSOCIATED PROTEIN RTF1 HOMOLOG"/>
    <property type="match status" value="1"/>
</dbReference>
<dbReference type="PANTHER" id="PTHR13115:SF14">
    <property type="entry name" value="ZINC FINGER CCCH DOMAIN-CONTAINING PROTEIN 19"/>
    <property type="match status" value="1"/>
</dbReference>
<dbReference type="Pfam" id="PF02213">
    <property type="entry name" value="GYF"/>
    <property type="match status" value="1"/>
</dbReference>
<dbReference type="Pfam" id="PF03126">
    <property type="entry name" value="Plus-3"/>
    <property type="match status" value="1"/>
</dbReference>
<dbReference type="Pfam" id="PF02201">
    <property type="entry name" value="SWIB"/>
    <property type="match status" value="1"/>
</dbReference>
<dbReference type="Pfam" id="PF00642">
    <property type="entry name" value="zf-CCCH"/>
    <property type="match status" value="1"/>
</dbReference>
<dbReference type="SMART" id="SM00444">
    <property type="entry name" value="GYF"/>
    <property type="match status" value="1"/>
</dbReference>
<dbReference type="SMART" id="SM00249">
    <property type="entry name" value="PHD"/>
    <property type="match status" value="1"/>
</dbReference>
<dbReference type="SMART" id="SM00719">
    <property type="entry name" value="Plus3"/>
    <property type="match status" value="1"/>
</dbReference>
<dbReference type="SMART" id="SM00151">
    <property type="entry name" value="SWIB"/>
    <property type="match status" value="1"/>
</dbReference>
<dbReference type="SUPFAM" id="SSF57903">
    <property type="entry name" value="FYVE/PHD zinc finger"/>
    <property type="match status" value="1"/>
</dbReference>
<dbReference type="SUPFAM" id="SSF55277">
    <property type="entry name" value="GYF domain"/>
    <property type="match status" value="1"/>
</dbReference>
<dbReference type="SUPFAM" id="SSF159042">
    <property type="entry name" value="Plus3-like"/>
    <property type="match status" value="1"/>
</dbReference>
<dbReference type="SUPFAM" id="SSF47592">
    <property type="entry name" value="SWIB/MDM2 domain"/>
    <property type="match status" value="1"/>
</dbReference>
<dbReference type="PROSITE" id="PS50829">
    <property type="entry name" value="GYF"/>
    <property type="match status" value="1"/>
</dbReference>
<dbReference type="PROSITE" id="PS51360">
    <property type="entry name" value="PLUS3"/>
    <property type="match status" value="1"/>
</dbReference>
<dbReference type="PROSITE" id="PS51925">
    <property type="entry name" value="SWIB_MDM2"/>
    <property type="match status" value="1"/>
</dbReference>
<dbReference type="PROSITE" id="PS50103">
    <property type="entry name" value="ZF_C3H1"/>
    <property type="match status" value="1"/>
</dbReference>
<dbReference type="PROSITE" id="PS01359">
    <property type="entry name" value="ZF_PHD_1"/>
    <property type="match status" value="1"/>
</dbReference>
<dbReference type="PROSITE" id="PS50016">
    <property type="entry name" value="ZF_PHD_2"/>
    <property type="match status" value="1"/>
</dbReference>
<protein>
    <recommendedName>
        <fullName>Zinc finger CCCH domain-containing protein 19</fullName>
        <shortName>AtC3H19</shortName>
    </recommendedName>
    <alternativeName>
        <fullName>Protein Needed for RDR2-independent DNA methylation</fullName>
    </alternativeName>
</protein>